<feature type="initiator methionine" description="Removed" evidence="4">
    <location>
        <position position="1"/>
    </location>
</feature>
<feature type="chain" id="PRO_0000108216" description="Cytochrome c">
    <location>
        <begin position="2"/>
        <end position="105"/>
    </location>
</feature>
<feature type="binding site" description="covalent">
    <location>
        <position position="15"/>
    </location>
    <ligand>
        <name>heme c</name>
        <dbReference type="ChEBI" id="CHEBI:61717"/>
    </ligand>
</feature>
<feature type="binding site" description="covalent">
    <location>
        <position position="18"/>
    </location>
    <ligand>
        <name>heme c</name>
        <dbReference type="ChEBI" id="CHEBI:61717"/>
    </ligand>
</feature>
<feature type="binding site" description="axial binding residue">
    <location>
        <position position="19"/>
    </location>
    <ligand>
        <name>heme c</name>
        <dbReference type="ChEBI" id="CHEBI:61717"/>
    </ligand>
    <ligandPart>
        <name>Fe</name>
        <dbReference type="ChEBI" id="CHEBI:18248"/>
    </ligandPart>
</feature>
<feature type="binding site" description="axial binding residue">
    <location>
        <position position="81"/>
    </location>
    <ligand>
        <name>heme c</name>
        <dbReference type="ChEBI" id="CHEBI:61717"/>
    </ligand>
    <ligandPart>
        <name>Fe</name>
        <dbReference type="ChEBI" id="CHEBI:18248"/>
    </ligandPart>
</feature>
<feature type="modified residue" description="N-acetylglycine" evidence="4">
    <location>
        <position position="2"/>
    </location>
</feature>
<feature type="modified residue" description="Phosphotyrosine" evidence="2">
    <location>
        <position position="49"/>
    </location>
</feature>
<feature type="modified residue" description="N6-succinyllysine" evidence="3">
    <location>
        <position position="56"/>
    </location>
</feature>
<feature type="modified residue" description="N6-acetyllysine; alternate" evidence="3">
    <location>
        <position position="73"/>
    </location>
</feature>
<feature type="modified residue" description="N6-succinyllysine; alternate" evidence="3">
    <location>
        <position position="73"/>
    </location>
</feature>
<feature type="modified residue" description="Phosphotyrosine" evidence="2">
    <location>
        <position position="98"/>
    </location>
</feature>
<feature type="modified residue" description="N6-acetyllysine" evidence="3">
    <location>
        <position position="100"/>
    </location>
</feature>
<feature type="sequence variant">
    <original>V</original>
    <variation>I</variation>
    <location>
        <position position="4"/>
    </location>
</feature>
<comment type="function">
    <text>Electron carrier protein. The oxidized form of the cytochrome c heme group can accept an electron from the heme group of the cytochrome c1 subunit of cytochrome reductase. Cytochrome c then transfers this electron to the cytochrome oxidase complex, the final protein carrier in the mitochondrial electron-transport chain.</text>
</comment>
<comment type="function">
    <text evidence="1">Plays a role in apoptosis. Suppression of the anti-apoptotic members or activation of the pro-apoptotic members of the Bcl-2 family leads to altered mitochondrial membrane permeability resulting in release of cytochrome c into the cytosol. Binding of cytochrome c to Apaf-1 triggers the activation of caspase-9, which then accelerates apoptosis by activating other caspases (By similarity).</text>
</comment>
<comment type="subcellular location">
    <subcellularLocation>
        <location>Mitochondrion intermembrane space</location>
    </subcellularLocation>
    <text>Loosely associated with the inner membrane.</text>
</comment>
<comment type="PTM">
    <text>Binds 1 heme c group covalently per subunit.</text>
</comment>
<comment type="PTM">
    <text evidence="1">Phosphorylation at Tyr-49 and Tyr-98 both reduce by half the turnover in the reaction with cytochrome c oxidase, down-regulating mitochondrial respiration.</text>
</comment>
<comment type="similarity">
    <text evidence="5">Belongs to the cytochrome c family.</text>
</comment>
<comment type="online information" name="Protein Spotlight">
    <link uri="https://www.proteinspotlight.org/back_issues/076"/>
    <text>Life shuttle - Issue 76 of November 2006</text>
</comment>
<reference key="1">
    <citation type="journal article" date="1978" name="J. Biol. Chem.">
        <title>Heterogeneity of amino acid sequence in hippopotamus cytochrome c.</title>
        <authorList>
            <person name="Thompson R.B."/>
            <person name="Borden D."/>
            <person name="Tarr G.E."/>
            <person name="Margoliash E."/>
        </authorList>
    </citation>
    <scope>PROTEIN SEQUENCE OF 2-105</scope>
    <scope>ACETYLATION AT GLY-2</scope>
</reference>
<protein>
    <recommendedName>
        <fullName>Cytochrome c</fullName>
    </recommendedName>
</protein>
<dbReference type="PIR" id="A00008">
    <property type="entry name" value="CCHP"/>
</dbReference>
<dbReference type="SMR" id="P00007"/>
<dbReference type="iPTMnet" id="P00007"/>
<dbReference type="GO" id="GO:0005829">
    <property type="term" value="C:cytosol"/>
    <property type="evidence" value="ECO:0000250"/>
    <property type="project" value="UniProtKB"/>
</dbReference>
<dbReference type="GO" id="GO:0005758">
    <property type="term" value="C:mitochondrial intermembrane space"/>
    <property type="evidence" value="ECO:0007669"/>
    <property type="project" value="UniProtKB-SubCell"/>
</dbReference>
<dbReference type="GO" id="GO:0009055">
    <property type="term" value="F:electron transfer activity"/>
    <property type="evidence" value="ECO:0007669"/>
    <property type="project" value="InterPro"/>
</dbReference>
<dbReference type="GO" id="GO:0020037">
    <property type="term" value="F:heme binding"/>
    <property type="evidence" value="ECO:0007669"/>
    <property type="project" value="InterPro"/>
</dbReference>
<dbReference type="GO" id="GO:0046872">
    <property type="term" value="F:metal ion binding"/>
    <property type="evidence" value="ECO:0007669"/>
    <property type="project" value="UniProtKB-KW"/>
</dbReference>
<dbReference type="GO" id="GO:0006915">
    <property type="term" value="P:apoptotic process"/>
    <property type="evidence" value="ECO:0007669"/>
    <property type="project" value="UniProtKB-KW"/>
</dbReference>
<dbReference type="FunFam" id="1.10.760.10:FF:000008">
    <property type="entry name" value="Cytochrome c"/>
    <property type="match status" value="1"/>
</dbReference>
<dbReference type="Gene3D" id="1.10.760.10">
    <property type="entry name" value="Cytochrome c-like domain"/>
    <property type="match status" value="1"/>
</dbReference>
<dbReference type="InterPro" id="IPR009056">
    <property type="entry name" value="Cyt_c-like_dom"/>
</dbReference>
<dbReference type="InterPro" id="IPR036909">
    <property type="entry name" value="Cyt_c-like_dom_sf"/>
</dbReference>
<dbReference type="InterPro" id="IPR002327">
    <property type="entry name" value="Cyt_c_1A/1B"/>
</dbReference>
<dbReference type="PANTHER" id="PTHR11961">
    <property type="entry name" value="CYTOCHROME C"/>
    <property type="match status" value="1"/>
</dbReference>
<dbReference type="Pfam" id="PF00034">
    <property type="entry name" value="Cytochrom_C"/>
    <property type="match status" value="1"/>
</dbReference>
<dbReference type="PRINTS" id="PR00604">
    <property type="entry name" value="CYTCHRMECIAB"/>
</dbReference>
<dbReference type="SUPFAM" id="SSF46626">
    <property type="entry name" value="Cytochrome c"/>
    <property type="match status" value="1"/>
</dbReference>
<dbReference type="PROSITE" id="PS51007">
    <property type="entry name" value="CYTC"/>
    <property type="match status" value="1"/>
</dbReference>
<sequence length="105" mass="11661">MGDVEKGKKIFVQKCAQCHTVEKGGKHKTGPNLHGLFGRKTGQSPGFSYTDANKNKGITWGEETLMEYLENPKKYIPGTKMIFAGIKKKGERADLIAYLKQATNE</sequence>
<keyword id="KW-0007">Acetylation</keyword>
<keyword id="KW-0053">Apoptosis</keyword>
<keyword id="KW-0903">Direct protein sequencing</keyword>
<keyword id="KW-0249">Electron transport</keyword>
<keyword id="KW-0349">Heme</keyword>
<keyword id="KW-0408">Iron</keyword>
<keyword id="KW-0479">Metal-binding</keyword>
<keyword id="KW-0496">Mitochondrion</keyword>
<keyword id="KW-0597">Phosphoprotein</keyword>
<keyword id="KW-0679">Respiratory chain</keyword>
<keyword id="KW-0813">Transport</keyword>
<evidence type="ECO:0000250" key="1"/>
<evidence type="ECO:0000250" key="2">
    <source>
        <dbReference type="UniProtKB" id="P62894"/>
    </source>
</evidence>
<evidence type="ECO:0000250" key="3">
    <source>
        <dbReference type="UniProtKB" id="P62897"/>
    </source>
</evidence>
<evidence type="ECO:0000269" key="4">
    <source>
    </source>
</evidence>
<evidence type="ECO:0000305" key="5"/>
<accession>P00007</accession>
<organism>
    <name type="scientific">Hippopotamus amphibius</name>
    <name type="common">Hippopotamus</name>
    <dbReference type="NCBI Taxonomy" id="9833"/>
    <lineage>
        <taxon>Eukaryota</taxon>
        <taxon>Metazoa</taxon>
        <taxon>Chordata</taxon>
        <taxon>Craniata</taxon>
        <taxon>Vertebrata</taxon>
        <taxon>Euteleostomi</taxon>
        <taxon>Mammalia</taxon>
        <taxon>Eutheria</taxon>
        <taxon>Laurasiatheria</taxon>
        <taxon>Artiodactyla</taxon>
        <taxon>Whippomorpha</taxon>
        <taxon>Ancodonta</taxon>
        <taxon>Hippopotamidae</taxon>
        <taxon>Hippopotamus</taxon>
    </lineage>
</organism>
<name>CYC_HIPAM</name>
<proteinExistence type="evidence at protein level"/>
<gene>
    <name type="primary">CYCS</name>
    <name type="synonym">CYC</name>
</gene>